<name>ECFA1_LACDB</name>
<keyword id="KW-0067">ATP-binding</keyword>
<keyword id="KW-1003">Cell membrane</keyword>
<keyword id="KW-0472">Membrane</keyword>
<keyword id="KW-0547">Nucleotide-binding</keyword>
<keyword id="KW-1278">Translocase</keyword>
<keyword id="KW-0813">Transport</keyword>
<reference key="1">
    <citation type="journal article" date="2006" name="Proc. Natl. Acad. Sci. U.S.A.">
        <title>Comparative genomics of the lactic acid bacteria.</title>
        <authorList>
            <person name="Makarova K.S."/>
            <person name="Slesarev A."/>
            <person name="Wolf Y.I."/>
            <person name="Sorokin A."/>
            <person name="Mirkin B."/>
            <person name="Koonin E.V."/>
            <person name="Pavlov A."/>
            <person name="Pavlova N."/>
            <person name="Karamychev V."/>
            <person name="Polouchine N."/>
            <person name="Shakhova V."/>
            <person name="Grigoriev I."/>
            <person name="Lou Y."/>
            <person name="Rohksar D."/>
            <person name="Lucas S."/>
            <person name="Huang K."/>
            <person name="Goodstein D.M."/>
            <person name="Hawkins T."/>
            <person name="Plengvidhya V."/>
            <person name="Welker D."/>
            <person name="Hughes J."/>
            <person name="Goh Y."/>
            <person name="Benson A."/>
            <person name="Baldwin K."/>
            <person name="Lee J.-H."/>
            <person name="Diaz-Muniz I."/>
            <person name="Dosti B."/>
            <person name="Smeianov V."/>
            <person name="Wechter W."/>
            <person name="Barabote R."/>
            <person name="Lorca G."/>
            <person name="Altermann E."/>
            <person name="Barrangou R."/>
            <person name="Ganesan B."/>
            <person name="Xie Y."/>
            <person name="Rawsthorne H."/>
            <person name="Tamir D."/>
            <person name="Parker C."/>
            <person name="Breidt F."/>
            <person name="Broadbent J.R."/>
            <person name="Hutkins R."/>
            <person name="O'Sullivan D."/>
            <person name="Steele J."/>
            <person name="Unlu G."/>
            <person name="Saier M.H. Jr."/>
            <person name="Klaenhammer T."/>
            <person name="Richardson P."/>
            <person name="Kozyavkin S."/>
            <person name="Weimer B.C."/>
            <person name="Mills D.A."/>
        </authorList>
    </citation>
    <scope>NUCLEOTIDE SEQUENCE [LARGE SCALE GENOMIC DNA]</scope>
    <source>
        <strain>ATCC BAA-365 / Lb-18</strain>
    </source>
</reference>
<feature type="chain" id="PRO_0000287949" description="Energy-coupling factor transporter ATP-binding protein EcfA1">
    <location>
        <begin position="1"/>
        <end position="282"/>
    </location>
</feature>
<feature type="domain" description="ABC transporter" evidence="1">
    <location>
        <begin position="6"/>
        <end position="243"/>
    </location>
</feature>
<feature type="binding site" evidence="1">
    <location>
        <begin position="40"/>
        <end position="47"/>
    </location>
    <ligand>
        <name>ATP</name>
        <dbReference type="ChEBI" id="CHEBI:30616"/>
    </ligand>
</feature>
<dbReference type="EC" id="7.-.-.-" evidence="1"/>
<dbReference type="EMBL" id="CP000412">
    <property type="protein sequence ID" value="ABJ58035.1"/>
    <property type="molecule type" value="Genomic_DNA"/>
</dbReference>
<dbReference type="RefSeq" id="WP_011678030.1">
    <property type="nucleotide sequence ID" value="NC_008529.1"/>
</dbReference>
<dbReference type="SMR" id="Q04BY7"/>
<dbReference type="KEGG" id="lbu:LBUL_0378"/>
<dbReference type="HOGENOM" id="CLU_000604_1_22_9"/>
<dbReference type="BioCyc" id="LDEL321956:LBUL_RS01765-MONOMER"/>
<dbReference type="GO" id="GO:0043190">
    <property type="term" value="C:ATP-binding cassette (ABC) transporter complex"/>
    <property type="evidence" value="ECO:0007669"/>
    <property type="project" value="TreeGrafter"/>
</dbReference>
<dbReference type="GO" id="GO:0005524">
    <property type="term" value="F:ATP binding"/>
    <property type="evidence" value="ECO:0007669"/>
    <property type="project" value="UniProtKB-KW"/>
</dbReference>
<dbReference type="GO" id="GO:0016887">
    <property type="term" value="F:ATP hydrolysis activity"/>
    <property type="evidence" value="ECO:0007669"/>
    <property type="project" value="InterPro"/>
</dbReference>
<dbReference type="GO" id="GO:0042626">
    <property type="term" value="F:ATPase-coupled transmembrane transporter activity"/>
    <property type="evidence" value="ECO:0007669"/>
    <property type="project" value="TreeGrafter"/>
</dbReference>
<dbReference type="CDD" id="cd03225">
    <property type="entry name" value="ABC_cobalt_CbiO_domain1"/>
    <property type="match status" value="1"/>
</dbReference>
<dbReference type="FunFam" id="3.40.50.300:FF:000224">
    <property type="entry name" value="Energy-coupling factor transporter ATP-binding protein EcfA"/>
    <property type="match status" value="1"/>
</dbReference>
<dbReference type="Gene3D" id="3.40.50.300">
    <property type="entry name" value="P-loop containing nucleotide triphosphate hydrolases"/>
    <property type="match status" value="1"/>
</dbReference>
<dbReference type="InterPro" id="IPR003593">
    <property type="entry name" value="AAA+_ATPase"/>
</dbReference>
<dbReference type="InterPro" id="IPR003439">
    <property type="entry name" value="ABC_transporter-like_ATP-bd"/>
</dbReference>
<dbReference type="InterPro" id="IPR017871">
    <property type="entry name" value="ABC_transporter-like_CS"/>
</dbReference>
<dbReference type="InterPro" id="IPR015856">
    <property type="entry name" value="ABC_transpr_CbiO/EcfA_su"/>
</dbReference>
<dbReference type="InterPro" id="IPR050095">
    <property type="entry name" value="ECF_ABC_transporter_ATP-bd"/>
</dbReference>
<dbReference type="InterPro" id="IPR030947">
    <property type="entry name" value="EcfA_1"/>
</dbReference>
<dbReference type="InterPro" id="IPR027417">
    <property type="entry name" value="P-loop_NTPase"/>
</dbReference>
<dbReference type="NCBIfam" id="TIGR04520">
    <property type="entry name" value="ECF_ATPase_1"/>
    <property type="match status" value="1"/>
</dbReference>
<dbReference type="NCBIfam" id="NF010156">
    <property type="entry name" value="PRK13635.1"/>
    <property type="match status" value="1"/>
</dbReference>
<dbReference type="NCBIfam" id="NF010167">
    <property type="entry name" value="PRK13648.1"/>
    <property type="match status" value="1"/>
</dbReference>
<dbReference type="PANTHER" id="PTHR43553:SF24">
    <property type="entry name" value="ENERGY-COUPLING FACTOR TRANSPORTER ATP-BINDING PROTEIN ECFA1"/>
    <property type="match status" value="1"/>
</dbReference>
<dbReference type="PANTHER" id="PTHR43553">
    <property type="entry name" value="HEAVY METAL TRANSPORTER"/>
    <property type="match status" value="1"/>
</dbReference>
<dbReference type="Pfam" id="PF00005">
    <property type="entry name" value="ABC_tran"/>
    <property type="match status" value="1"/>
</dbReference>
<dbReference type="SMART" id="SM00382">
    <property type="entry name" value="AAA"/>
    <property type="match status" value="1"/>
</dbReference>
<dbReference type="SUPFAM" id="SSF52540">
    <property type="entry name" value="P-loop containing nucleoside triphosphate hydrolases"/>
    <property type="match status" value="1"/>
</dbReference>
<dbReference type="PROSITE" id="PS00211">
    <property type="entry name" value="ABC_TRANSPORTER_1"/>
    <property type="match status" value="1"/>
</dbReference>
<dbReference type="PROSITE" id="PS50893">
    <property type="entry name" value="ABC_TRANSPORTER_2"/>
    <property type="match status" value="1"/>
</dbReference>
<dbReference type="PROSITE" id="PS51246">
    <property type="entry name" value="CBIO"/>
    <property type="match status" value="1"/>
</dbReference>
<accession>Q04BY7</accession>
<organism>
    <name type="scientific">Lactobacillus delbrueckii subsp. bulgaricus (strain ATCC BAA-365 / Lb-18)</name>
    <dbReference type="NCBI Taxonomy" id="321956"/>
    <lineage>
        <taxon>Bacteria</taxon>
        <taxon>Bacillati</taxon>
        <taxon>Bacillota</taxon>
        <taxon>Bacilli</taxon>
        <taxon>Lactobacillales</taxon>
        <taxon>Lactobacillaceae</taxon>
        <taxon>Lactobacillus</taxon>
    </lineage>
</organism>
<evidence type="ECO:0000255" key="1">
    <source>
        <dbReference type="HAMAP-Rule" id="MF_01710"/>
    </source>
</evidence>
<gene>
    <name evidence="1" type="primary">ecfA1</name>
    <name type="synonym">cbiO1</name>
    <name type="ordered locus">LBUL_0378</name>
</gene>
<proteinExistence type="inferred from homology"/>
<sequence>MSDNIISFDHVTFTYPDSPRPAVSDLSFAIERGSWTALIGHNGSGKSTVSKLINGLLAPDDLDKSSITVDGVKLGADTVWEVREKVGIVFQNPDNQFVGATVSDDVAFGLENRAVPRPEMLKIVAQAVADVGMADYADSEPSNLSGGQKQRVAIAGILAVKPQVIILDESTSMLDPEGKEQILDLVRKIKEDNNLTVISITHDLEEAAGADQVLVLDDGQLLDQGKPEEIFPKVEMLKRIGLDIPFVYRLKQLLKERGIVLPDEIDDDEKLVQSLWQLNSKM</sequence>
<protein>
    <recommendedName>
        <fullName evidence="1">Energy-coupling factor transporter ATP-binding protein EcfA1</fullName>
        <shortName evidence="1">ECF transporter A component EcfA1</shortName>
        <ecNumber evidence="1">7.-.-.-</ecNumber>
    </recommendedName>
</protein>
<comment type="function">
    <text evidence="1">ATP-binding (A) component of a common energy-coupling factor (ECF) ABC-transporter complex. Unlike classic ABC transporters this ECF transporter provides the energy necessary to transport a number of different substrates.</text>
</comment>
<comment type="subunit">
    <text evidence="1">Forms a stable energy-coupling factor (ECF) transporter complex composed of 2 membrane-embedded substrate-binding proteins (S component), 2 ATP-binding proteins (A component) and 2 transmembrane proteins (T component).</text>
</comment>
<comment type="subcellular location">
    <subcellularLocation>
        <location evidence="1">Cell membrane</location>
        <topology evidence="1">Peripheral membrane protein</topology>
    </subcellularLocation>
</comment>
<comment type="similarity">
    <text evidence="1">Belongs to the ABC transporter superfamily. Energy-coupling factor EcfA family.</text>
</comment>